<dbReference type="EMBL" id="AF110195">
    <property type="protein sequence ID" value="AAF44721.1"/>
    <property type="molecule type" value="mRNA"/>
</dbReference>
<dbReference type="RefSeq" id="NP_446230.1">
    <property type="nucleotide sequence ID" value="NM_053778.1"/>
</dbReference>
<dbReference type="SMR" id="Q9JM04"/>
<dbReference type="FunCoup" id="Q9JM04">
    <property type="interactions" value="2432"/>
</dbReference>
<dbReference type="STRING" id="10116.ENSRNOP00000026844"/>
<dbReference type="iPTMnet" id="Q9JM04"/>
<dbReference type="PhosphoSitePlus" id="Q9JM04"/>
<dbReference type="jPOST" id="Q9JM04"/>
<dbReference type="PaxDb" id="10116-ENSRNOP00000026844"/>
<dbReference type="GeneID" id="116458"/>
<dbReference type="KEGG" id="rno:116458"/>
<dbReference type="AGR" id="RGD:620071"/>
<dbReference type="CTD" id="9670"/>
<dbReference type="RGD" id="620071">
    <property type="gene designation" value="Ipo13"/>
</dbReference>
<dbReference type="eggNOG" id="KOG2022">
    <property type="taxonomic scope" value="Eukaryota"/>
</dbReference>
<dbReference type="InParanoid" id="Q9JM04"/>
<dbReference type="OrthoDB" id="2016913at2759"/>
<dbReference type="PhylomeDB" id="Q9JM04"/>
<dbReference type="PRO" id="PR:Q9JM04"/>
<dbReference type="Proteomes" id="UP000002494">
    <property type="component" value="Unplaced"/>
</dbReference>
<dbReference type="GO" id="GO:0005737">
    <property type="term" value="C:cytoplasm"/>
    <property type="evidence" value="ECO:0000318"/>
    <property type="project" value="GO_Central"/>
</dbReference>
<dbReference type="GO" id="GO:0042564">
    <property type="term" value="C:NLS-dependent protein nuclear import complex"/>
    <property type="evidence" value="ECO:0000303"/>
    <property type="project" value="RGD"/>
</dbReference>
<dbReference type="GO" id="GO:0005634">
    <property type="term" value="C:nucleus"/>
    <property type="evidence" value="ECO:0007669"/>
    <property type="project" value="UniProtKB-SubCell"/>
</dbReference>
<dbReference type="GO" id="GO:0035259">
    <property type="term" value="F:nuclear glucocorticoid receptor binding"/>
    <property type="evidence" value="ECO:0000353"/>
    <property type="project" value="RGD"/>
</dbReference>
<dbReference type="GO" id="GO:0031267">
    <property type="term" value="F:small GTPase binding"/>
    <property type="evidence" value="ECO:0007669"/>
    <property type="project" value="InterPro"/>
</dbReference>
<dbReference type="GO" id="GO:0006606">
    <property type="term" value="P:protein import into nucleus"/>
    <property type="evidence" value="ECO:0000315"/>
    <property type="project" value="RGD"/>
</dbReference>
<dbReference type="FunFam" id="1.25.10.10:FF:000107">
    <property type="entry name" value="Importin-13"/>
    <property type="match status" value="1"/>
</dbReference>
<dbReference type="Gene3D" id="1.25.10.10">
    <property type="entry name" value="Leucine-rich Repeat Variant"/>
    <property type="match status" value="1"/>
</dbReference>
<dbReference type="InterPro" id="IPR011989">
    <property type="entry name" value="ARM-like"/>
</dbReference>
<dbReference type="InterPro" id="IPR016024">
    <property type="entry name" value="ARM-type_fold"/>
</dbReference>
<dbReference type="InterPro" id="IPR013598">
    <property type="entry name" value="Exportin-1/Importin-b-like"/>
</dbReference>
<dbReference type="InterPro" id="IPR001494">
    <property type="entry name" value="Importin-beta_N"/>
</dbReference>
<dbReference type="InterPro" id="IPR051345">
    <property type="entry name" value="Importin_beta-like_NTR"/>
</dbReference>
<dbReference type="InterPro" id="IPR040709">
    <property type="entry name" value="Importin_rep_1"/>
</dbReference>
<dbReference type="InterPro" id="IPR040944">
    <property type="entry name" value="Importin_rep_2"/>
</dbReference>
<dbReference type="InterPro" id="IPR040520">
    <property type="entry name" value="Importin_rep_3"/>
</dbReference>
<dbReference type="PANTHER" id="PTHR12363:SF33">
    <property type="entry name" value="IMPORTIN-13"/>
    <property type="match status" value="1"/>
</dbReference>
<dbReference type="PANTHER" id="PTHR12363">
    <property type="entry name" value="TRANSPORTIN 3 AND IMPORTIN 13"/>
    <property type="match status" value="1"/>
</dbReference>
<dbReference type="Pfam" id="PF03810">
    <property type="entry name" value="IBN_N"/>
    <property type="match status" value="1"/>
</dbReference>
<dbReference type="Pfam" id="PF18773">
    <property type="entry name" value="Importin_rep"/>
    <property type="match status" value="1"/>
</dbReference>
<dbReference type="Pfam" id="PF18786">
    <property type="entry name" value="Importin_rep_2"/>
    <property type="match status" value="2"/>
</dbReference>
<dbReference type="Pfam" id="PF18806">
    <property type="entry name" value="Importin_rep_3"/>
    <property type="match status" value="1"/>
</dbReference>
<dbReference type="Pfam" id="PF24138">
    <property type="entry name" value="TPR_TNPO3_IPO13_2nd"/>
    <property type="match status" value="1"/>
</dbReference>
<dbReference type="Pfam" id="PF24140">
    <property type="entry name" value="TPR_TNPO3_IPO13_3rd"/>
    <property type="match status" value="1"/>
</dbReference>
<dbReference type="Pfam" id="PF24139">
    <property type="entry name" value="TPR_TNPO3_IPO13_4th"/>
    <property type="match status" value="1"/>
</dbReference>
<dbReference type="Pfam" id="PF08389">
    <property type="entry name" value="Xpo1"/>
    <property type="match status" value="1"/>
</dbReference>
<dbReference type="SMART" id="SM00913">
    <property type="entry name" value="IBN_N"/>
    <property type="match status" value="1"/>
</dbReference>
<dbReference type="SUPFAM" id="SSF48371">
    <property type="entry name" value="ARM repeat"/>
    <property type="match status" value="1"/>
</dbReference>
<dbReference type="PROSITE" id="PS50166">
    <property type="entry name" value="IMPORTIN_B_NT"/>
    <property type="match status" value="1"/>
</dbReference>
<evidence type="ECO:0000250" key="1"/>
<evidence type="ECO:0000255" key="2">
    <source>
        <dbReference type="PROSITE-ProRule" id="PRU00115"/>
    </source>
</evidence>
<evidence type="ECO:0000269" key="3">
    <source>
    </source>
</evidence>
<evidence type="ECO:0000305" key="4"/>
<protein>
    <recommendedName>
        <fullName>Importin-13</fullName>
        <shortName>Imp13</shortName>
    </recommendedName>
    <alternativeName>
        <fullName>Late gestation lung 2 protein</fullName>
    </alternativeName>
</protein>
<feature type="chain" id="PRO_0000120760" description="Importin-13">
    <location>
        <begin position="1"/>
        <end position="963"/>
    </location>
</feature>
<feature type="repeat" description="HEAT 1">
    <location>
        <begin position="24"/>
        <end position="54"/>
    </location>
</feature>
<feature type="domain" description="Importin N-terminal" evidence="2">
    <location>
        <begin position="45"/>
        <end position="111"/>
    </location>
</feature>
<feature type="repeat" description="HEAT 2">
    <location>
        <begin position="56"/>
        <end position="88"/>
    </location>
</feature>
<feature type="repeat" description="HEAT 3">
    <location>
        <begin position="95"/>
        <end position="135"/>
    </location>
</feature>
<feature type="repeat" description="HEAT 4">
    <location>
        <begin position="142"/>
        <end position="179"/>
    </location>
</feature>
<feature type="repeat" description="HEAT 5">
    <location>
        <begin position="194"/>
        <end position="231"/>
    </location>
</feature>
<feature type="repeat" description="HEAT 6">
    <location>
        <begin position="236"/>
        <end position="268"/>
    </location>
</feature>
<feature type="repeat" description="HEAT 7">
    <location>
        <begin position="276"/>
        <end position="325"/>
    </location>
</feature>
<feature type="repeat" description="HEAT 8">
    <location>
        <begin position="330"/>
        <end position="372"/>
    </location>
</feature>
<feature type="repeat" description="HEAT 9">
    <location>
        <begin position="375"/>
        <end position="438"/>
    </location>
</feature>
<feature type="repeat" description="HEAT 10">
    <location>
        <begin position="440"/>
        <end position="476"/>
    </location>
</feature>
<feature type="repeat" description="HEAT 11">
    <location>
        <begin position="487"/>
        <end position="522"/>
    </location>
</feature>
<feature type="repeat" description="HEAT 12">
    <location>
        <begin position="524"/>
        <end position="558"/>
    </location>
</feature>
<feature type="repeat" description="HEAT 13">
    <location>
        <begin position="562"/>
        <end position="600"/>
    </location>
</feature>
<feature type="repeat" description="HEAT 14">
    <location>
        <begin position="603"/>
        <end position="648"/>
    </location>
</feature>
<feature type="repeat" description="HEAT 15">
    <location>
        <begin position="676"/>
        <end position="716"/>
    </location>
</feature>
<feature type="repeat" description="HEAT 16">
    <location>
        <begin position="720"/>
        <end position="754"/>
    </location>
</feature>
<feature type="repeat" description="HEAT 17">
    <location>
        <begin position="761"/>
        <end position="803"/>
    </location>
</feature>
<feature type="repeat" description="HEAT 18">
    <location>
        <begin position="815"/>
        <end position="845"/>
    </location>
</feature>
<feature type="repeat" description="HEAT 19">
    <location>
        <begin position="860"/>
        <end position="893"/>
    </location>
</feature>
<feature type="repeat" description="HEAT 20">
    <location>
        <begin position="897"/>
        <end position="931"/>
    </location>
</feature>
<reference key="1">
    <citation type="journal article" date="2000" name="Am. J. Respir. Cell Mol. Biol.">
        <title>A novel karyopherin-beta homolog is developmentally and hormonally regulated in fetal lung.</title>
        <authorList>
            <person name="Zhang C."/>
            <person name="Sweezey N.B."/>
            <person name="Gagnon S."/>
            <person name="Muskat B."/>
            <person name="Koehler D."/>
            <person name="Post M."/>
            <person name="Kaplan F."/>
        </authorList>
    </citation>
    <scope>NUCLEOTIDE SEQUENCE [MRNA]</scope>
    <scope>TISSUE SPECIFICITY</scope>
    <scope>DEVELOPMENTAL STAGE</scope>
    <scope>INDUCTION</scope>
    <source>
        <strain>Wistar</strain>
        <tissue>Lung</tissue>
    </source>
</reference>
<accession>Q9JM04</accession>
<name>IPO13_RAT</name>
<sequence length="963" mass="108187">MERREEQLGAAGAGAAPALDFTVENVEKALHQLYYDPNIENKNLAQKWLMQAQVSPQAWHFSWQLLQPDKVPEIQYFGASALHIKISRYWSDIPTDQYESLKAHSFTQITRFASGSKIVLTRLCVALASLALSMMPDAWPCAVADMVRLFQAEDSPVDSQGRCLALLELLTVLPEEFQTSRLPQYRKGLVRASLAVECGAVFPLLEQLLQQPSSPSCVRQKVLKCFSSWVQLEVPLQDCEALIQAAFAALQDSELFDSSVEAIVNAISQPDAQRYVNTLLKLIPLVLGLQEQLRQAVQNGDMETSHGICRIAVALGENHSRALLDQVEHWQSFLALVNMIMFCTGIPGHYPVNETTSSLTLTFWYTLQDDILSFEAEKQAVYQQVYRPVYFQLVDVLLHKAQFPSDEEYGFWSSDEKEQFRIYRVDISDTLMYVYEMLGAELLSNLYDKLGRLLTSSEEPYSWQHTEALLYGFQSIAETIDVNYSDVVPGLIGLIPRISISNVQLADTVMFTIGALSEWLADHPVMINSVLPLVLHALGNPELSVSSVSTLKKICRECKYELPPYAANIVAVSQDVLMKQIHKTSQCMWLMQALGFLLSALQVEENLKNLHSLISTYIQQLEKLAEEIPKPSNKLAIVHILGLLSNLFTTLDVSHHEDDHEGPELRKLPVPQGPNPVVVVLQQVFQLIQKVLSKWLSDAQVVEAVCAIFEKSVKTLLDDFAPMVPQLCEMLGRMYSTVPQASALDLTRQLVHIFAHEPAHFPPIEALFLLVTSVTLSLFQQGPRDHPDIVDSFMQLLAQALKRKPDLFQCERLDVKAVFQCAVLALKFPEAPTVKASCGFFTELLPRCGEIESVGKVVQEDGRMLLIAVLEAIGGQASRSLMDCFADILFALNKHCFSLLSMWIKEALQPPGFPSARLSPEQKDTFSQQILRERVNKRRVKEMVKEFTLLCRGLHGTDYTADY</sequence>
<keyword id="KW-0963">Cytoplasm</keyword>
<keyword id="KW-0539">Nucleus</keyword>
<keyword id="KW-0653">Protein transport</keyword>
<keyword id="KW-1185">Reference proteome</keyword>
<keyword id="KW-0677">Repeat</keyword>
<keyword id="KW-0813">Transport</keyword>
<proteinExistence type="evidence at transcript level"/>
<comment type="function">
    <text evidence="1">Functions in nuclear protein import as nuclear transport receptor. Serves as receptor for nuclear localization signals (NLS) in cargo substrates. Is thought to mediate docking of the importin/substrate complex to the nuclear pore complex (NPC) through binding to nucleoporin and the complex is subsequently translocated through the pore by an energy requiring, Ran-dependent mechanism. At the nucleoplasmic side of the NPC, Ran binds to the importin, the importin/substrate complex dissociates and importin is re-exported from the nucleus to the cytoplasm where GTP hydrolysis releases Ran. The directionality of nuclear import is thought to be conferred by an asymmetric distribution of the GTP- and GDP-bound forms of Ran between the cytoplasm and nucleus (By similarity). Mediates the nuclear import of UBC9, the RBM8A/MAGOH complex, PAX6 and probably other members of the paired homeobox family. Also mediates nuclear export of eIF-1A, and the cytoplasmic release of eIF-1A is triggered by the loading of import substrates onto IPO13 (By similarity).</text>
</comment>
<comment type="subunit">
    <text evidence="1">Interacts with UBC9, RAN, RBM8A, eIF-1A and PAX6.</text>
</comment>
<comment type="subcellular location">
    <subcellularLocation>
        <location evidence="1">Cytoplasm</location>
    </subcellularLocation>
    <subcellularLocation>
        <location evidence="1">Nucleus</location>
    </subcellularLocation>
</comment>
<comment type="tissue specificity">
    <text evidence="3">Expressed in fetal brain, heart, intestine and kidney.</text>
</comment>
<comment type="developmental stage">
    <text evidence="3">Differentially expressed in fetal lung with highest levels at gestational days 14 to 16.</text>
</comment>
<comment type="induction">
    <text evidence="3">By cortisol.</text>
</comment>
<comment type="similarity">
    <text evidence="4">Belongs to the importin beta family.</text>
</comment>
<gene>
    <name type="primary">Ipo13</name>
    <name type="synonym">Imp13</name>
    <name type="synonym">Lgl2</name>
</gene>
<organism>
    <name type="scientific">Rattus norvegicus</name>
    <name type="common">Rat</name>
    <dbReference type="NCBI Taxonomy" id="10116"/>
    <lineage>
        <taxon>Eukaryota</taxon>
        <taxon>Metazoa</taxon>
        <taxon>Chordata</taxon>
        <taxon>Craniata</taxon>
        <taxon>Vertebrata</taxon>
        <taxon>Euteleostomi</taxon>
        <taxon>Mammalia</taxon>
        <taxon>Eutheria</taxon>
        <taxon>Euarchontoglires</taxon>
        <taxon>Glires</taxon>
        <taxon>Rodentia</taxon>
        <taxon>Myomorpha</taxon>
        <taxon>Muroidea</taxon>
        <taxon>Muridae</taxon>
        <taxon>Murinae</taxon>
        <taxon>Rattus</taxon>
    </lineage>
</organism>